<dbReference type="EC" id="1.1.1.25" evidence="1"/>
<dbReference type="EMBL" id="CP001649">
    <property type="protein sequence ID" value="ACS81867.1"/>
    <property type="molecule type" value="Genomic_DNA"/>
</dbReference>
<dbReference type="RefSeq" id="WP_015853683.1">
    <property type="nucleotide sequence ID" value="NC_012881.1"/>
</dbReference>
<dbReference type="SMR" id="C6BUS3"/>
<dbReference type="STRING" id="526222.Desal_3822"/>
<dbReference type="KEGG" id="dsa:Desal_3822"/>
<dbReference type="eggNOG" id="COG0169">
    <property type="taxonomic scope" value="Bacteria"/>
</dbReference>
<dbReference type="HOGENOM" id="CLU_044063_4_1_7"/>
<dbReference type="OrthoDB" id="9792692at2"/>
<dbReference type="UniPathway" id="UPA00053">
    <property type="reaction ID" value="UER00087"/>
</dbReference>
<dbReference type="Proteomes" id="UP000002601">
    <property type="component" value="Chromosome"/>
</dbReference>
<dbReference type="GO" id="GO:0050661">
    <property type="term" value="F:NADP binding"/>
    <property type="evidence" value="ECO:0007669"/>
    <property type="project" value="InterPro"/>
</dbReference>
<dbReference type="GO" id="GO:0004764">
    <property type="term" value="F:shikimate 3-dehydrogenase (NADP+) activity"/>
    <property type="evidence" value="ECO:0007669"/>
    <property type="project" value="UniProtKB-UniRule"/>
</dbReference>
<dbReference type="GO" id="GO:0008652">
    <property type="term" value="P:amino acid biosynthetic process"/>
    <property type="evidence" value="ECO:0007669"/>
    <property type="project" value="UniProtKB-KW"/>
</dbReference>
<dbReference type="GO" id="GO:0009073">
    <property type="term" value="P:aromatic amino acid family biosynthetic process"/>
    <property type="evidence" value="ECO:0007669"/>
    <property type="project" value="UniProtKB-KW"/>
</dbReference>
<dbReference type="GO" id="GO:0009423">
    <property type="term" value="P:chorismate biosynthetic process"/>
    <property type="evidence" value="ECO:0007669"/>
    <property type="project" value="UniProtKB-UniRule"/>
</dbReference>
<dbReference type="GO" id="GO:0019632">
    <property type="term" value="P:shikimate metabolic process"/>
    <property type="evidence" value="ECO:0007669"/>
    <property type="project" value="InterPro"/>
</dbReference>
<dbReference type="CDD" id="cd01065">
    <property type="entry name" value="NAD_bind_Shikimate_DH"/>
    <property type="match status" value="1"/>
</dbReference>
<dbReference type="Gene3D" id="3.40.50.10860">
    <property type="entry name" value="Leucine Dehydrogenase, chain A, domain 1"/>
    <property type="match status" value="1"/>
</dbReference>
<dbReference type="Gene3D" id="3.40.50.720">
    <property type="entry name" value="NAD(P)-binding Rossmann-like Domain"/>
    <property type="match status" value="1"/>
</dbReference>
<dbReference type="HAMAP" id="MF_00222">
    <property type="entry name" value="Shikimate_DH_AroE"/>
    <property type="match status" value="1"/>
</dbReference>
<dbReference type="InterPro" id="IPR046346">
    <property type="entry name" value="Aminoacid_DH-like_N_sf"/>
</dbReference>
<dbReference type="InterPro" id="IPR036291">
    <property type="entry name" value="NAD(P)-bd_dom_sf"/>
</dbReference>
<dbReference type="InterPro" id="IPR041121">
    <property type="entry name" value="SDH_C"/>
</dbReference>
<dbReference type="InterPro" id="IPR011342">
    <property type="entry name" value="Shikimate_DH"/>
</dbReference>
<dbReference type="InterPro" id="IPR013708">
    <property type="entry name" value="Shikimate_DH-bd_N"/>
</dbReference>
<dbReference type="InterPro" id="IPR022893">
    <property type="entry name" value="Shikimate_DH_fam"/>
</dbReference>
<dbReference type="InterPro" id="IPR006151">
    <property type="entry name" value="Shikm_DH/Glu-tRNA_Rdtase"/>
</dbReference>
<dbReference type="NCBIfam" id="TIGR00507">
    <property type="entry name" value="aroE"/>
    <property type="match status" value="1"/>
</dbReference>
<dbReference type="PANTHER" id="PTHR21089:SF1">
    <property type="entry name" value="BIFUNCTIONAL 3-DEHYDROQUINATE DEHYDRATASE_SHIKIMATE DEHYDROGENASE, CHLOROPLASTIC"/>
    <property type="match status" value="1"/>
</dbReference>
<dbReference type="PANTHER" id="PTHR21089">
    <property type="entry name" value="SHIKIMATE DEHYDROGENASE"/>
    <property type="match status" value="1"/>
</dbReference>
<dbReference type="Pfam" id="PF18317">
    <property type="entry name" value="SDH_C"/>
    <property type="match status" value="1"/>
</dbReference>
<dbReference type="Pfam" id="PF01488">
    <property type="entry name" value="Shikimate_DH"/>
    <property type="match status" value="1"/>
</dbReference>
<dbReference type="Pfam" id="PF08501">
    <property type="entry name" value="Shikimate_dh_N"/>
    <property type="match status" value="1"/>
</dbReference>
<dbReference type="SUPFAM" id="SSF53223">
    <property type="entry name" value="Aminoacid dehydrogenase-like, N-terminal domain"/>
    <property type="match status" value="1"/>
</dbReference>
<dbReference type="SUPFAM" id="SSF51735">
    <property type="entry name" value="NAD(P)-binding Rossmann-fold domains"/>
    <property type="match status" value="1"/>
</dbReference>
<keyword id="KW-0028">Amino-acid biosynthesis</keyword>
<keyword id="KW-0057">Aromatic amino acid biosynthesis</keyword>
<keyword id="KW-0521">NADP</keyword>
<keyword id="KW-0560">Oxidoreductase</keyword>
<keyword id="KW-1185">Reference proteome</keyword>
<reference key="1">
    <citation type="submission" date="2009-06" db="EMBL/GenBank/DDBJ databases">
        <title>Complete sequence of Desulfovibrio salexigens DSM 2638.</title>
        <authorList>
            <consortium name="US DOE Joint Genome Institute"/>
            <person name="Lucas S."/>
            <person name="Copeland A."/>
            <person name="Lapidus A."/>
            <person name="Glavina del Rio T."/>
            <person name="Tice H."/>
            <person name="Bruce D."/>
            <person name="Goodwin L."/>
            <person name="Pitluck S."/>
            <person name="Munk A.C."/>
            <person name="Brettin T."/>
            <person name="Detter J.C."/>
            <person name="Han C."/>
            <person name="Tapia R."/>
            <person name="Larimer F."/>
            <person name="Land M."/>
            <person name="Hauser L."/>
            <person name="Kyrpides N."/>
            <person name="Anderson I."/>
            <person name="Wall J.D."/>
            <person name="Arkin A.P."/>
            <person name="Dehal P."/>
            <person name="Chivian D."/>
            <person name="Giles B."/>
            <person name="Hazen T.C."/>
        </authorList>
    </citation>
    <scope>NUCLEOTIDE SEQUENCE [LARGE SCALE GENOMIC DNA]</scope>
    <source>
        <strain>ATCC 14822 / DSM 2638 / NCIMB 8403 / VKM B-1763</strain>
    </source>
</reference>
<comment type="function">
    <text evidence="1">Involved in the biosynthesis of the chorismate, which leads to the biosynthesis of aromatic amino acids. Catalyzes the reversible NADPH linked reduction of 3-dehydroshikimate (DHSA) to yield shikimate (SA).</text>
</comment>
<comment type="catalytic activity">
    <reaction evidence="1">
        <text>shikimate + NADP(+) = 3-dehydroshikimate + NADPH + H(+)</text>
        <dbReference type="Rhea" id="RHEA:17737"/>
        <dbReference type="ChEBI" id="CHEBI:15378"/>
        <dbReference type="ChEBI" id="CHEBI:16630"/>
        <dbReference type="ChEBI" id="CHEBI:36208"/>
        <dbReference type="ChEBI" id="CHEBI:57783"/>
        <dbReference type="ChEBI" id="CHEBI:58349"/>
        <dbReference type="EC" id="1.1.1.25"/>
    </reaction>
</comment>
<comment type="pathway">
    <text evidence="1">Metabolic intermediate biosynthesis; chorismate biosynthesis; chorismate from D-erythrose 4-phosphate and phosphoenolpyruvate: step 4/7.</text>
</comment>
<comment type="subunit">
    <text evidence="1">Homodimer.</text>
</comment>
<comment type="similarity">
    <text evidence="1">Belongs to the shikimate dehydrogenase family.</text>
</comment>
<evidence type="ECO:0000255" key="1">
    <source>
        <dbReference type="HAMAP-Rule" id="MF_00222"/>
    </source>
</evidence>
<name>AROE_MARSD</name>
<gene>
    <name evidence="1" type="primary">aroE</name>
    <name type="ordered locus">Desal_3822</name>
</gene>
<feature type="chain" id="PRO_1000204260" description="Shikimate dehydrogenase (NADP(+))">
    <location>
        <begin position="1"/>
        <end position="272"/>
    </location>
</feature>
<feature type="active site" description="Proton acceptor" evidence="1">
    <location>
        <position position="71"/>
    </location>
</feature>
<feature type="binding site" evidence="1">
    <location>
        <begin position="20"/>
        <end position="22"/>
    </location>
    <ligand>
        <name>shikimate</name>
        <dbReference type="ChEBI" id="CHEBI:36208"/>
    </ligand>
</feature>
<feature type="binding site" evidence="1">
    <location>
        <position position="67"/>
    </location>
    <ligand>
        <name>shikimate</name>
        <dbReference type="ChEBI" id="CHEBI:36208"/>
    </ligand>
</feature>
<feature type="binding site" evidence="1">
    <location>
        <position position="83"/>
    </location>
    <ligand>
        <name>NADP(+)</name>
        <dbReference type="ChEBI" id="CHEBI:58349"/>
    </ligand>
</feature>
<feature type="binding site" evidence="1">
    <location>
        <position position="92"/>
    </location>
    <ligand>
        <name>shikimate</name>
        <dbReference type="ChEBI" id="CHEBI:36208"/>
    </ligand>
</feature>
<feature type="binding site" evidence="1">
    <location>
        <position position="107"/>
    </location>
    <ligand>
        <name>shikimate</name>
        <dbReference type="ChEBI" id="CHEBI:36208"/>
    </ligand>
</feature>
<feature type="binding site" evidence="1">
    <location>
        <begin position="129"/>
        <end position="133"/>
    </location>
    <ligand>
        <name>NADP(+)</name>
        <dbReference type="ChEBI" id="CHEBI:58349"/>
    </ligand>
</feature>
<feature type="binding site" evidence="1">
    <location>
        <begin position="153"/>
        <end position="158"/>
    </location>
    <ligand>
        <name>NADP(+)</name>
        <dbReference type="ChEBI" id="CHEBI:58349"/>
    </ligand>
</feature>
<feature type="binding site" evidence="1">
    <location>
        <position position="216"/>
    </location>
    <ligand>
        <name>NADP(+)</name>
        <dbReference type="ChEBI" id="CHEBI:58349"/>
    </ligand>
</feature>
<feature type="binding site" evidence="1">
    <location>
        <position position="218"/>
    </location>
    <ligand>
        <name>shikimate</name>
        <dbReference type="ChEBI" id="CHEBI:36208"/>
    </ligand>
</feature>
<feature type="binding site" evidence="1">
    <location>
        <position position="239"/>
    </location>
    <ligand>
        <name>NADP(+)</name>
        <dbReference type="ChEBI" id="CHEBI:58349"/>
    </ligand>
</feature>
<organism>
    <name type="scientific">Maridesulfovibrio salexigens (strain ATCC 14822 / DSM 2638 / NCIMB 8403 / VKM B-1763)</name>
    <name type="common">Desulfovibrio salexigens</name>
    <dbReference type="NCBI Taxonomy" id="526222"/>
    <lineage>
        <taxon>Bacteria</taxon>
        <taxon>Pseudomonadati</taxon>
        <taxon>Thermodesulfobacteriota</taxon>
        <taxon>Desulfovibrionia</taxon>
        <taxon>Desulfovibrionales</taxon>
        <taxon>Desulfovibrionaceae</taxon>
        <taxon>Maridesulfovibrio</taxon>
    </lineage>
</organism>
<protein>
    <recommendedName>
        <fullName evidence="1">Shikimate dehydrogenase (NADP(+))</fullName>
        <shortName evidence="1">SDH</shortName>
        <ecNumber evidence="1">1.1.1.25</ecNumber>
    </recommendedName>
</protein>
<sequence length="272" mass="30276">MDVFKPEKLFGIIGHPLGHTMSPLLHNWGFAEHKIPAVYMAWPTEPEKVESFMQTFRNLPISGASVTIPHKLSVMDYIDQLTERAESVGAVNTLYWDGDKIVGDNTDAAGVSEPLRPYSDQIKKALLIGAGGAARAAITGLQSLGIKEIFITNRTKSKADDLAAEFKISALDWDARGDQHLDLIVNSTSLGMSGKFEEINPMIMENQDKNTIIFDLVYNPLETVLIRKAKSKGCTVIHGIEMFVHQGLEQFRLWTGIKLDEKKARELLLEKL</sequence>
<accession>C6BUS3</accession>
<proteinExistence type="inferred from homology"/>